<keyword id="KW-0002">3D-structure</keyword>
<keyword id="KW-0269">Exonuclease</keyword>
<keyword id="KW-0378">Hydrolase</keyword>
<keyword id="KW-0540">Nuclease</keyword>
<keyword id="KW-1185">Reference proteome</keyword>
<accession>P04536</accession>
<protein>
    <recommendedName>
        <fullName>Exodeoxyribonuclease</fullName>
        <ecNumber>3.1.11.1</ecNumber>
    </recommendedName>
    <alternativeName>
        <fullName>3'-5' exonuclease</fullName>
    </alternativeName>
</protein>
<proteinExistence type="evidence at protein level"/>
<name>EXOD_BPT4</name>
<sequence>MFDFIIDFETMGSGEKAAVIDLAVIAFDPNPEVVETFDELVSRGIKIKFDLKSQKGHRLFTKSTIEWWKNQSPEARKNIAPSDEDVSTIDGIAKFNDYINAHNIDPWKSQGWCRGMSFDFPILVDLIRDIQRLNGVSENELDTFKLEPCKFWNQRDIRTRIEALLLVRDMTTCPLPKGTLDGFVAHDSIHDCAKDILMMKYALRYAMGLEDAPSEEECDPLSLPTKR</sequence>
<feature type="chain" id="PRO_0000164940" description="Exodeoxyribonuclease">
    <location>
        <begin position="1"/>
        <end position="227"/>
    </location>
</feature>
<organismHost>
    <name type="scientific">Escherichia coli</name>
    <dbReference type="NCBI Taxonomy" id="562"/>
</organismHost>
<organism>
    <name type="scientific">Enterobacteria phage T4</name>
    <name type="common">Bacteriophage T4</name>
    <dbReference type="NCBI Taxonomy" id="10665"/>
    <lineage>
        <taxon>Viruses</taxon>
        <taxon>Duplodnaviria</taxon>
        <taxon>Heunggongvirae</taxon>
        <taxon>Uroviricota</taxon>
        <taxon>Caudoviricetes</taxon>
        <taxon>Straboviridae</taxon>
        <taxon>Tevenvirinae</taxon>
        <taxon>Tequatrovirus</taxon>
    </lineage>
</organism>
<reference key="1">
    <citation type="journal article" date="1987" name="Mol. Gen. Genet.">
        <title>The bacteriophage T4 dexA gene: sequence and analysis of a gene conditionally required for DNA replication.</title>
        <authorList>
            <person name="Gauss P."/>
            <person name="Gayle M."/>
            <person name="Winter R.B."/>
            <person name="Gold L."/>
        </authorList>
    </citation>
    <scope>NUCLEOTIDE SEQUENCE [GENOMIC DNA]</scope>
</reference>
<reference key="2">
    <citation type="journal article" date="2003" name="Microbiol. Mol. Biol. Rev.">
        <title>Bacteriophage T4 genome.</title>
        <authorList>
            <person name="Miller E.S."/>
            <person name="Kutter E."/>
            <person name="Mosig G."/>
            <person name="Arisaka F."/>
            <person name="Kunisawa T."/>
            <person name="Ruger W."/>
        </authorList>
    </citation>
    <scope>NUCLEOTIDE SEQUENCE [LARGE SCALE GENOMIC DNA]</scope>
</reference>
<reference key="3">
    <citation type="journal article" date="1988" name="J. Bacteriol.">
        <title>Effect of DNA sequence and structure on nuclease activity of the DexA protein of bacteriophage T4.</title>
        <authorList>
            <person name="Gruber H."/>
            <person name="Kern G."/>
            <person name="Gauss P."/>
            <person name="Gold L."/>
        </authorList>
    </citation>
    <scope>FUNCTION</scope>
</reference>
<reference key="4">
    <citation type="journal article" date="1999" name="Genetics">
        <title>Role of exonucleolytic degradation in group I intron homing in phage T4.</title>
        <authorList>
            <person name="Huang Y.J."/>
            <person name="Parker M.M."/>
            <person name="Belfort M."/>
        </authorList>
    </citation>
    <scope>FUNCTION IN INTRON HOMING</scope>
</reference>
<gene>
    <name type="primary">dexA</name>
</gene>
<evidence type="ECO:0000269" key="1">
    <source>
    </source>
</evidence>
<evidence type="ECO:0000269" key="2">
    <source>
    </source>
</evidence>
<comment type="function">
    <text evidence="1 2">3'-5' exonuclease that preferentially uses ssDNA as substrate. Plays a role in group I intron homing. May play a role in the final step of host DNA degradation, by scavenging DNA into mononucleotides.</text>
</comment>
<comment type="catalytic activity">
    <reaction>
        <text>Exonucleolytic cleavage in the 3'- to 5'-direction to yield nucleoside 5'-phosphates.</text>
        <dbReference type="EC" id="3.1.11.1"/>
    </reaction>
</comment>
<dbReference type="EC" id="3.1.11.1"/>
<dbReference type="EMBL" id="X04834">
    <property type="protein sequence ID" value="CAA28536.1"/>
    <property type="molecule type" value="Genomic_DNA"/>
</dbReference>
<dbReference type="EMBL" id="AF158101">
    <property type="protein sequence ID" value="AAD42564.1"/>
    <property type="molecule type" value="Genomic_DNA"/>
</dbReference>
<dbReference type="PIR" id="B32338">
    <property type="entry name" value="ZXBPB4"/>
</dbReference>
<dbReference type="RefSeq" id="NP_049629.1">
    <property type="nucleotide sequence ID" value="NC_000866.4"/>
</dbReference>
<dbReference type="PDB" id="8KEL">
    <property type="method" value="X-ray"/>
    <property type="resolution" value="2.88 A"/>
    <property type="chains" value="A/B/C/D=1-227"/>
</dbReference>
<dbReference type="PDB" id="8KEN">
    <property type="method" value="X-ray"/>
    <property type="resolution" value="2.38 A"/>
    <property type="chains" value="A/B=1-227"/>
</dbReference>
<dbReference type="PDBsum" id="8KEL"/>
<dbReference type="PDBsum" id="8KEN"/>
<dbReference type="GeneID" id="1258605"/>
<dbReference type="KEGG" id="vg:1258605"/>
<dbReference type="OrthoDB" id="13707at10239"/>
<dbReference type="Proteomes" id="UP000009087">
    <property type="component" value="Segment"/>
</dbReference>
<dbReference type="GO" id="GO:0008310">
    <property type="term" value="F:single-stranded DNA 3'-5' DNA exonuclease activity"/>
    <property type="evidence" value="ECO:0007669"/>
    <property type="project" value="UniProtKB-EC"/>
</dbReference>
<dbReference type="InterPro" id="IPR012337">
    <property type="entry name" value="RNaseH-like_sf"/>
</dbReference>
<dbReference type="InterPro" id="IPR033390">
    <property type="entry name" value="Rv2179c-like"/>
</dbReference>
<dbReference type="Pfam" id="PF16473">
    <property type="entry name" value="Rv2179c-like"/>
    <property type="match status" value="1"/>
</dbReference>
<dbReference type="SUPFAM" id="SSF53098">
    <property type="entry name" value="Ribonuclease H-like"/>
    <property type="match status" value="1"/>
</dbReference>